<dbReference type="EMBL" id="CP000709">
    <property type="protein sequence ID" value="ABQ62515.1"/>
    <property type="molecule type" value="Genomic_DNA"/>
</dbReference>
<dbReference type="RefSeq" id="WP_006016441.1">
    <property type="nucleotide sequence ID" value="NC_009504.1"/>
</dbReference>
<dbReference type="SMR" id="A5VVH9"/>
<dbReference type="GeneID" id="45126221"/>
<dbReference type="KEGG" id="bov:BOV_A0853"/>
<dbReference type="HOGENOM" id="CLU_089975_0_0_5"/>
<dbReference type="PhylomeDB" id="A5VVH9"/>
<dbReference type="Proteomes" id="UP000006383">
    <property type="component" value="Chromosome II"/>
</dbReference>
<dbReference type="GO" id="GO:0097367">
    <property type="term" value="F:carbohydrate derivative binding"/>
    <property type="evidence" value="ECO:0007669"/>
    <property type="project" value="InterPro"/>
</dbReference>
<dbReference type="GO" id="GO:1901135">
    <property type="term" value="P:carbohydrate derivative metabolic process"/>
    <property type="evidence" value="ECO:0007669"/>
    <property type="project" value="InterPro"/>
</dbReference>
<dbReference type="CDD" id="cd05013">
    <property type="entry name" value="SIS_RpiR"/>
    <property type="match status" value="1"/>
</dbReference>
<dbReference type="Gene3D" id="3.40.50.10490">
    <property type="entry name" value="Glucose-6-phosphate isomerase like protein, domain 1"/>
    <property type="match status" value="1"/>
</dbReference>
<dbReference type="HAMAP" id="MF_01240">
    <property type="entry name" value="UPF0309"/>
    <property type="match status" value="1"/>
</dbReference>
<dbReference type="InterPro" id="IPR035472">
    <property type="entry name" value="RpiR-like_SIS"/>
</dbReference>
<dbReference type="InterPro" id="IPR001347">
    <property type="entry name" value="SIS_dom"/>
</dbReference>
<dbReference type="InterPro" id="IPR046348">
    <property type="entry name" value="SIS_dom_sf"/>
</dbReference>
<dbReference type="InterPro" id="IPR050099">
    <property type="entry name" value="SIS_GmhA/DiaA_subfam"/>
</dbReference>
<dbReference type="InterPro" id="IPR022951">
    <property type="entry name" value="UPF0309"/>
</dbReference>
<dbReference type="NCBIfam" id="NF002805">
    <property type="entry name" value="PRK02947.1"/>
    <property type="match status" value="1"/>
</dbReference>
<dbReference type="PANTHER" id="PTHR30390:SF7">
    <property type="entry name" value="PHOSPHOHEPTOSE ISOMERASE"/>
    <property type="match status" value="1"/>
</dbReference>
<dbReference type="PANTHER" id="PTHR30390">
    <property type="entry name" value="SEDOHEPTULOSE 7-PHOSPHATE ISOMERASE / DNAA INITIATOR-ASSOCIATING FACTOR FOR REPLICATION INITIATION"/>
    <property type="match status" value="1"/>
</dbReference>
<dbReference type="Pfam" id="PF13580">
    <property type="entry name" value="SIS_2"/>
    <property type="match status" value="1"/>
</dbReference>
<dbReference type="SUPFAM" id="SSF53697">
    <property type="entry name" value="SIS domain"/>
    <property type="match status" value="1"/>
</dbReference>
<dbReference type="PROSITE" id="PS51464">
    <property type="entry name" value="SIS"/>
    <property type="match status" value="1"/>
</dbReference>
<evidence type="ECO:0000255" key="1">
    <source>
        <dbReference type="HAMAP-Rule" id="MF_01240"/>
    </source>
</evidence>
<protein>
    <recommendedName>
        <fullName evidence="1">UPF0309 protein BOV_A0853</fullName>
    </recommendedName>
</protein>
<organism>
    <name type="scientific">Brucella ovis (strain ATCC 25840 / 63/290 / NCTC 10512)</name>
    <dbReference type="NCBI Taxonomy" id="444178"/>
    <lineage>
        <taxon>Bacteria</taxon>
        <taxon>Pseudomonadati</taxon>
        <taxon>Pseudomonadota</taxon>
        <taxon>Alphaproteobacteria</taxon>
        <taxon>Hyphomicrobiales</taxon>
        <taxon>Brucellaceae</taxon>
        <taxon>Brucella/Ochrobactrum group</taxon>
        <taxon>Brucella</taxon>
    </lineage>
</organism>
<feature type="chain" id="PRO_1000066943" description="UPF0309 protein BOV_A0853">
    <location>
        <begin position="1"/>
        <end position="242"/>
    </location>
</feature>
<feature type="domain" description="SIS" evidence="1">
    <location>
        <begin position="30"/>
        <end position="209"/>
    </location>
</feature>
<name>Y3053_BRUO2</name>
<gene>
    <name type="ordered locus">BOV_A0853</name>
</gene>
<accession>A5VVH9</accession>
<comment type="similarity">
    <text evidence="1">Belongs to the UPF0309 family.</text>
</comment>
<reference key="1">
    <citation type="journal article" date="2009" name="PLoS ONE">
        <title>Genome degradation in Brucella ovis corresponds with narrowing of its host range and tissue tropism.</title>
        <authorList>
            <person name="Tsolis R.M."/>
            <person name="Seshadri R."/>
            <person name="Santos R.L."/>
            <person name="Sangari F.J."/>
            <person name="Lobo J.M."/>
            <person name="de Jong M.F."/>
            <person name="Ren Q."/>
            <person name="Myers G."/>
            <person name="Brinkac L.M."/>
            <person name="Nelson W.C."/>
            <person name="Deboy R.T."/>
            <person name="Angiuoli S."/>
            <person name="Khouri H."/>
            <person name="Dimitrov G."/>
            <person name="Robinson J.R."/>
            <person name="Mulligan S."/>
            <person name="Walker R.L."/>
            <person name="Elzer P.E."/>
            <person name="Hassan K.A."/>
            <person name="Paulsen I.T."/>
        </authorList>
    </citation>
    <scope>NUCLEOTIDE SEQUENCE [LARGE SCALE GENOMIC DNA]</scope>
    <source>
        <strain>ATCC 25840 / 63/290 / NCTC 10512</strain>
    </source>
</reference>
<proteinExistence type="inferred from homology"/>
<sequence length="242" mass="25669">MTEITDRYFNDVIARLSGLRDRLAAQMEKAADLIAAAARADRRVYVFGTGHSHMMAEELHYRAGGLAITVPILCGSIMLQDGAVASSHFERIEGAVRPILDRYGIRDGDVLVVVSNSGVNAAPIEAARYAREKGAAIIALTSVAYSNTIARGRTQLLSLADVVLDNDAPSGDAVLEIAGSALKVGPVSTALGVTILNAVFADVAARLVGEGDALIYLSANMPGSGDINRLLVERYRDRNPHL</sequence>